<feature type="chain" id="PRO_0000072946" description="Glycine--tRNA ligase">
    <location>
        <begin position="1"/>
        <end position="458"/>
    </location>
</feature>
<feature type="binding site" evidence="1">
    <location>
        <position position="97"/>
    </location>
    <ligand>
        <name>substrate</name>
    </ligand>
</feature>
<feature type="binding site" evidence="1">
    <location>
        <position position="171"/>
    </location>
    <ligand>
        <name>substrate</name>
    </ligand>
</feature>
<feature type="binding site" evidence="1">
    <location>
        <begin position="203"/>
        <end position="205"/>
    </location>
    <ligand>
        <name>ATP</name>
        <dbReference type="ChEBI" id="CHEBI:30616"/>
    </ligand>
</feature>
<feature type="binding site" evidence="1">
    <location>
        <begin position="213"/>
        <end position="218"/>
    </location>
    <ligand>
        <name>ATP</name>
        <dbReference type="ChEBI" id="CHEBI:30616"/>
    </ligand>
</feature>
<feature type="binding site" evidence="1">
    <location>
        <begin position="218"/>
        <end position="222"/>
    </location>
    <ligand>
        <name>substrate</name>
    </ligand>
</feature>
<feature type="binding site" evidence="1">
    <location>
        <begin position="287"/>
        <end position="288"/>
    </location>
    <ligand>
        <name>ATP</name>
        <dbReference type="ChEBI" id="CHEBI:30616"/>
    </ligand>
</feature>
<feature type="binding site" evidence="1">
    <location>
        <begin position="327"/>
        <end position="331"/>
    </location>
    <ligand>
        <name>substrate</name>
    </ligand>
</feature>
<feature type="binding site" evidence="1">
    <location>
        <begin position="331"/>
        <end position="334"/>
    </location>
    <ligand>
        <name>ATP</name>
        <dbReference type="ChEBI" id="CHEBI:30616"/>
    </ligand>
</feature>
<evidence type="ECO:0000255" key="1">
    <source>
        <dbReference type="HAMAP-Rule" id="MF_00253"/>
    </source>
</evidence>
<reference key="1">
    <citation type="journal article" date="2006" name="J. Bacteriol.">
        <title>Pathogenomic sequence analysis of Bacillus cereus and Bacillus thuringiensis isolates closely related to Bacillus anthracis.</title>
        <authorList>
            <person name="Han C.S."/>
            <person name="Xie G."/>
            <person name="Challacombe J.F."/>
            <person name="Altherr M.R."/>
            <person name="Bhotika S.S."/>
            <person name="Bruce D."/>
            <person name="Campbell C.S."/>
            <person name="Campbell M.L."/>
            <person name="Chen J."/>
            <person name="Chertkov O."/>
            <person name="Cleland C."/>
            <person name="Dimitrijevic M."/>
            <person name="Doggett N.A."/>
            <person name="Fawcett J.J."/>
            <person name="Glavina T."/>
            <person name="Goodwin L.A."/>
            <person name="Hill K.K."/>
            <person name="Hitchcock P."/>
            <person name="Jackson P.J."/>
            <person name="Keim P."/>
            <person name="Kewalramani A.R."/>
            <person name="Longmire J."/>
            <person name="Lucas S."/>
            <person name="Malfatti S."/>
            <person name="McMurry K."/>
            <person name="Meincke L.J."/>
            <person name="Misra M."/>
            <person name="Moseman B.L."/>
            <person name="Mundt M."/>
            <person name="Munk A.C."/>
            <person name="Okinaka R.T."/>
            <person name="Parson-Quintana B."/>
            <person name="Reilly L.P."/>
            <person name="Richardson P."/>
            <person name="Robinson D.L."/>
            <person name="Rubin E."/>
            <person name="Saunders E."/>
            <person name="Tapia R."/>
            <person name="Tesmer J.G."/>
            <person name="Thayer N."/>
            <person name="Thompson L.S."/>
            <person name="Tice H."/>
            <person name="Ticknor L.O."/>
            <person name="Wills P.L."/>
            <person name="Brettin T.S."/>
            <person name="Gilna P."/>
        </authorList>
    </citation>
    <scope>NUCLEOTIDE SEQUENCE [LARGE SCALE GENOMIC DNA]</scope>
    <source>
        <strain>97-27</strain>
    </source>
</reference>
<keyword id="KW-0030">Aminoacyl-tRNA synthetase</keyword>
<keyword id="KW-0067">ATP-binding</keyword>
<keyword id="KW-0963">Cytoplasm</keyword>
<keyword id="KW-0436">Ligase</keyword>
<keyword id="KW-0547">Nucleotide-binding</keyword>
<keyword id="KW-0648">Protein biosynthesis</keyword>
<sequence>MYSMEQVVNLAKHRGFVFPGSEIYGGLANTWDYGPLGIELKNNVKKAWWKKFIQESPYNVGLDAAILMNPKTWIASGHVGNFNDPMIDCKKCKARHRADKLIEDALDAKGIEMVVDGLTFDQMADLMKEHEVKCPDCSSEEFTEIRQFNLMFKTFQGVTESSTNEIFLRPETAQGIFVNFKNVQRSMRKKLPFGIGQIGKSFRNEITPGNFTFRTREFEQMELEFFCKPGEDLEWFAFWRETCKNWLLSLGMTEESMRLRDHGEEELSHYSNATTDIEFKFPFGWGELWGVASRTDFDLKRHMEHSNEDFNYIDPQTNERYVPYCIEPSLGADRVTLAFLCDAYEEEQLENDSRTVLRFHPALAPYKAAILPLSKKLSEGATEVFAELAKDFMVDFDETGSIGKRYRRQDEIGTPFCITYDFDSVEDKAVTVRDRDTMEQVRMPISELKGFLEKKIQF</sequence>
<organism>
    <name type="scientific">Bacillus thuringiensis subsp. konkukian (strain 97-27)</name>
    <dbReference type="NCBI Taxonomy" id="281309"/>
    <lineage>
        <taxon>Bacteria</taxon>
        <taxon>Bacillati</taxon>
        <taxon>Bacillota</taxon>
        <taxon>Bacilli</taxon>
        <taxon>Bacillales</taxon>
        <taxon>Bacillaceae</taxon>
        <taxon>Bacillus</taxon>
        <taxon>Bacillus cereus group</taxon>
    </lineage>
</organism>
<dbReference type="EC" id="6.1.1.14" evidence="1"/>
<dbReference type="EMBL" id="AE017355">
    <property type="protein sequence ID" value="AAT61013.1"/>
    <property type="molecule type" value="Genomic_DNA"/>
</dbReference>
<dbReference type="RefSeq" id="WP_000287157.1">
    <property type="nucleotide sequence ID" value="NC_005957.1"/>
</dbReference>
<dbReference type="RefSeq" id="YP_038935.1">
    <property type="nucleotide sequence ID" value="NC_005957.1"/>
</dbReference>
<dbReference type="SMR" id="Q6HBZ1"/>
<dbReference type="KEGG" id="btk:BT9727_4624"/>
<dbReference type="PATRIC" id="fig|281309.8.peg.4923"/>
<dbReference type="HOGENOM" id="CLU_015515_2_1_9"/>
<dbReference type="Proteomes" id="UP000001301">
    <property type="component" value="Chromosome"/>
</dbReference>
<dbReference type="GO" id="GO:0005737">
    <property type="term" value="C:cytoplasm"/>
    <property type="evidence" value="ECO:0007669"/>
    <property type="project" value="UniProtKB-SubCell"/>
</dbReference>
<dbReference type="GO" id="GO:0005524">
    <property type="term" value="F:ATP binding"/>
    <property type="evidence" value="ECO:0007669"/>
    <property type="project" value="UniProtKB-UniRule"/>
</dbReference>
<dbReference type="GO" id="GO:0140096">
    <property type="term" value="F:catalytic activity, acting on a protein"/>
    <property type="evidence" value="ECO:0007669"/>
    <property type="project" value="UniProtKB-ARBA"/>
</dbReference>
<dbReference type="GO" id="GO:0004820">
    <property type="term" value="F:glycine-tRNA ligase activity"/>
    <property type="evidence" value="ECO:0000250"/>
    <property type="project" value="UniProtKB"/>
</dbReference>
<dbReference type="GO" id="GO:0046983">
    <property type="term" value="F:protein dimerization activity"/>
    <property type="evidence" value="ECO:0000250"/>
    <property type="project" value="UniProtKB"/>
</dbReference>
<dbReference type="GO" id="GO:0016740">
    <property type="term" value="F:transferase activity"/>
    <property type="evidence" value="ECO:0007669"/>
    <property type="project" value="UniProtKB-ARBA"/>
</dbReference>
<dbReference type="GO" id="GO:0006426">
    <property type="term" value="P:glycyl-tRNA aminoacylation"/>
    <property type="evidence" value="ECO:0007669"/>
    <property type="project" value="UniProtKB-UniRule"/>
</dbReference>
<dbReference type="CDD" id="cd00774">
    <property type="entry name" value="GlyRS-like_core"/>
    <property type="match status" value="1"/>
</dbReference>
<dbReference type="CDD" id="cd00858">
    <property type="entry name" value="GlyRS_anticodon"/>
    <property type="match status" value="1"/>
</dbReference>
<dbReference type="FunFam" id="3.30.40.230:FF:000004">
    <property type="entry name" value="Glycine--tRNA ligase"/>
    <property type="match status" value="1"/>
</dbReference>
<dbReference type="FunFam" id="3.40.50.800:FF:000002">
    <property type="entry name" value="Glycine--tRNA ligase"/>
    <property type="match status" value="1"/>
</dbReference>
<dbReference type="Gene3D" id="3.30.40.230">
    <property type="match status" value="1"/>
</dbReference>
<dbReference type="Gene3D" id="3.40.50.800">
    <property type="entry name" value="Anticodon-binding domain"/>
    <property type="match status" value="1"/>
</dbReference>
<dbReference type="Gene3D" id="3.30.930.10">
    <property type="entry name" value="Bira Bifunctional Protein, Domain 2"/>
    <property type="match status" value="1"/>
</dbReference>
<dbReference type="HAMAP" id="MF_00253_B">
    <property type="entry name" value="Gly_tRNA_synth_B"/>
    <property type="match status" value="1"/>
</dbReference>
<dbReference type="InterPro" id="IPR002314">
    <property type="entry name" value="aa-tRNA-synt_IIb"/>
</dbReference>
<dbReference type="InterPro" id="IPR006195">
    <property type="entry name" value="aa-tRNA-synth_II"/>
</dbReference>
<dbReference type="InterPro" id="IPR045864">
    <property type="entry name" value="aa-tRNA-synth_II/BPL/LPL"/>
</dbReference>
<dbReference type="InterPro" id="IPR004154">
    <property type="entry name" value="Anticodon-bd"/>
</dbReference>
<dbReference type="InterPro" id="IPR036621">
    <property type="entry name" value="Anticodon-bd_dom_sf"/>
</dbReference>
<dbReference type="InterPro" id="IPR027031">
    <property type="entry name" value="Gly-tRNA_synthase/POLG2"/>
</dbReference>
<dbReference type="InterPro" id="IPR022961">
    <property type="entry name" value="Gly_tRNA_ligase_bac"/>
</dbReference>
<dbReference type="InterPro" id="IPR033731">
    <property type="entry name" value="GlyRS-like_core"/>
</dbReference>
<dbReference type="InterPro" id="IPR002315">
    <property type="entry name" value="tRNA-synt_gly"/>
</dbReference>
<dbReference type="NCBIfam" id="TIGR00389">
    <property type="entry name" value="glyS_dimeric"/>
    <property type="match status" value="1"/>
</dbReference>
<dbReference type="NCBIfam" id="NF003211">
    <property type="entry name" value="PRK04173.1"/>
    <property type="match status" value="1"/>
</dbReference>
<dbReference type="PANTHER" id="PTHR10745:SF8">
    <property type="entry name" value="DNA POLYMERASE SUBUNIT GAMMA-2, MITOCHONDRIAL"/>
    <property type="match status" value="1"/>
</dbReference>
<dbReference type="PANTHER" id="PTHR10745">
    <property type="entry name" value="GLYCYL-TRNA SYNTHETASE/DNA POLYMERASE SUBUNIT GAMMA-2"/>
    <property type="match status" value="1"/>
</dbReference>
<dbReference type="Pfam" id="PF03129">
    <property type="entry name" value="HGTP_anticodon"/>
    <property type="match status" value="1"/>
</dbReference>
<dbReference type="Pfam" id="PF00587">
    <property type="entry name" value="tRNA-synt_2b"/>
    <property type="match status" value="1"/>
</dbReference>
<dbReference type="PRINTS" id="PR01043">
    <property type="entry name" value="TRNASYNTHGLY"/>
</dbReference>
<dbReference type="SUPFAM" id="SSF52954">
    <property type="entry name" value="Class II aaRS ABD-related"/>
    <property type="match status" value="1"/>
</dbReference>
<dbReference type="SUPFAM" id="SSF55681">
    <property type="entry name" value="Class II aaRS and biotin synthetases"/>
    <property type="match status" value="1"/>
</dbReference>
<dbReference type="PROSITE" id="PS50862">
    <property type="entry name" value="AA_TRNA_LIGASE_II"/>
    <property type="match status" value="1"/>
</dbReference>
<comment type="function">
    <text evidence="1">Catalyzes the attachment of glycine to tRNA(Gly).</text>
</comment>
<comment type="catalytic activity">
    <reaction evidence="1">
        <text>tRNA(Gly) + glycine + ATP = glycyl-tRNA(Gly) + AMP + diphosphate</text>
        <dbReference type="Rhea" id="RHEA:16013"/>
        <dbReference type="Rhea" id="RHEA-COMP:9664"/>
        <dbReference type="Rhea" id="RHEA-COMP:9683"/>
        <dbReference type="ChEBI" id="CHEBI:30616"/>
        <dbReference type="ChEBI" id="CHEBI:33019"/>
        <dbReference type="ChEBI" id="CHEBI:57305"/>
        <dbReference type="ChEBI" id="CHEBI:78442"/>
        <dbReference type="ChEBI" id="CHEBI:78522"/>
        <dbReference type="ChEBI" id="CHEBI:456215"/>
        <dbReference type="EC" id="6.1.1.14"/>
    </reaction>
</comment>
<comment type="subunit">
    <text evidence="1">Homodimer.</text>
</comment>
<comment type="subcellular location">
    <subcellularLocation>
        <location evidence="1">Cytoplasm</location>
    </subcellularLocation>
</comment>
<comment type="similarity">
    <text evidence="1">Belongs to the class-II aminoacyl-tRNA synthetase family.</text>
</comment>
<accession>Q6HBZ1</accession>
<gene>
    <name evidence="1" type="primary">glyQS</name>
    <name type="synonym">glyS</name>
    <name type="ordered locus">BT9727_4624</name>
</gene>
<protein>
    <recommendedName>
        <fullName evidence="1">Glycine--tRNA ligase</fullName>
        <ecNumber evidence="1">6.1.1.14</ecNumber>
    </recommendedName>
    <alternativeName>
        <fullName evidence="1">Glycyl-tRNA synthetase</fullName>
        <shortName evidence="1">GlyRS</shortName>
    </alternativeName>
</protein>
<proteinExistence type="inferred from homology"/>
<name>SYG_BACHK</name>